<proteinExistence type="inferred from homology"/>
<dbReference type="EC" id="4.2.1.9" evidence="1"/>
<dbReference type="EMBL" id="CP000671">
    <property type="protein sequence ID" value="ABQ98988.1"/>
    <property type="molecule type" value="Genomic_DNA"/>
</dbReference>
<dbReference type="SMR" id="A5UDY7"/>
<dbReference type="KEGG" id="hip:CGSHiEE_08425"/>
<dbReference type="HOGENOM" id="CLU_014271_4_2_6"/>
<dbReference type="UniPathway" id="UPA00047">
    <property type="reaction ID" value="UER00057"/>
</dbReference>
<dbReference type="UniPathway" id="UPA00049">
    <property type="reaction ID" value="UER00061"/>
</dbReference>
<dbReference type="GO" id="GO:0005829">
    <property type="term" value="C:cytosol"/>
    <property type="evidence" value="ECO:0007669"/>
    <property type="project" value="TreeGrafter"/>
</dbReference>
<dbReference type="GO" id="GO:0051537">
    <property type="term" value="F:2 iron, 2 sulfur cluster binding"/>
    <property type="evidence" value="ECO:0007669"/>
    <property type="project" value="UniProtKB-UniRule"/>
</dbReference>
<dbReference type="GO" id="GO:0004160">
    <property type="term" value="F:dihydroxy-acid dehydratase activity"/>
    <property type="evidence" value="ECO:0007669"/>
    <property type="project" value="UniProtKB-UniRule"/>
</dbReference>
<dbReference type="GO" id="GO:0000287">
    <property type="term" value="F:magnesium ion binding"/>
    <property type="evidence" value="ECO:0007669"/>
    <property type="project" value="UniProtKB-UniRule"/>
</dbReference>
<dbReference type="GO" id="GO:0009097">
    <property type="term" value="P:isoleucine biosynthetic process"/>
    <property type="evidence" value="ECO:0007669"/>
    <property type="project" value="UniProtKB-UniRule"/>
</dbReference>
<dbReference type="GO" id="GO:0009099">
    <property type="term" value="P:L-valine biosynthetic process"/>
    <property type="evidence" value="ECO:0007669"/>
    <property type="project" value="UniProtKB-UniRule"/>
</dbReference>
<dbReference type="FunFam" id="3.50.30.80:FF:000001">
    <property type="entry name" value="Dihydroxy-acid dehydratase"/>
    <property type="match status" value="1"/>
</dbReference>
<dbReference type="Gene3D" id="3.50.30.80">
    <property type="entry name" value="IlvD/EDD C-terminal domain-like"/>
    <property type="match status" value="1"/>
</dbReference>
<dbReference type="HAMAP" id="MF_00012">
    <property type="entry name" value="IlvD"/>
    <property type="match status" value="1"/>
</dbReference>
<dbReference type="InterPro" id="IPR042096">
    <property type="entry name" value="Dihydro-acid_dehy_C"/>
</dbReference>
<dbReference type="InterPro" id="IPR004404">
    <property type="entry name" value="DihydroxyA_deHydtase"/>
</dbReference>
<dbReference type="InterPro" id="IPR020558">
    <property type="entry name" value="DiOHA_6PGluconate_deHydtase_CS"/>
</dbReference>
<dbReference type="InterPro" id="IPR056740">
    <property type="entry name" value="ILV_EDD_C"/>
</dbReference>
<dbReference type="InterPro" id="IPR000581">
    <property type="entry name" value="ILV_EDD_N"/>
</dbReference>
<dbReference type="InterPro" id="IPR037237">
    <property type="entry name" value="IlvD/EDD_N"/>
</dbReference>
<dbReference type="NCBIfam" id="TIGR00110">
    <property type="entry name" value="ilvD"/>
    <property type="match status" value="1"/>
</dbReference>
<dbReference type="NCBIfam" id="NF009103">
    <property type="entry name" value="PRK12448.1"/>
    <property type="match status" value="1"/>
</dbReference>
<dbReference type="PANTHER" id="PTHR43661">
    <property type="entry name" value="D-XYLONATE DEHYDRATASE"/>
    <property type="match status" value="1"/>
</dbReference>
<dbReference type="PANTHER" id="PTHR43661:SF3">
    <property type="entry name" value="D-XYLONATE DEHYDRATASE YAGF-RELATED"/>
    <property type="match status" value="1"/>
</dbReference>
<dbReference type="Pfam" id="PF24877">
    <property type="entry name" value="ILV_EDD_C"/>
    <property type="match status" value="1"/>
</dbReference>
<dbReference type="Pfam" id="PF00920">
    <property type="entry name" value="ILVD_EDD_N"/>
    <property type="match status" value="1"/>
</dbReference>
<dbReference type="SUPFAM" id="SSF143975">
    <property type="entry name" value="IlvD/EDD N-terminal domain-like"/>
    <property type="match status" value="1"/>
</dbReference>
<dbReference type="SUPFAM" id="SSF52016">
    <property type="entry name" value="LeuD/IlvD-like"/>
    <property type="match status" value="1"/>
</dbReference>
<dbReference type="PROSITE" id="PS00886">
    <property type="entry name" value="ILVD_EDD_1"/>
    <property type="match status" value="1"/>
</dbReference>
<dbReference type="PROSITE" id="PS00887">
    <property type="entry name" value="ILVD_EDD_2"/>
    <property type="match status" value="1"/>
</dbReference>
<accession>A5UDY7</accession>
<comment type="function">
    <text evidence="1">Functions in the biosynthesis of branched-chain amino acids. Catalyzes the dehydration of (2R,3R)-2,3-dihydroxy-3-methylpentanoate (2,3-dihydroxy-3-methylvalerate) into 2-oxo-3-methylpentanoate (2-oxo-3-methylvalerate) and of (2R)-2,3-dihydroxy-3-methylbutanoate (2,3-dihydroxyisovalerate) into 2-oxo-3-methylbutanoate (2-oxoisovalerate), the penultimate precursor to L-isoleucine and L-valine, respectively.</text>
</comment>
<comment type="catalytic activity">
    <reaction evidence="1">
        <text>(2R)-2,3-dihydroxy-3-methylbutanoate = 3-methyl-2-oxobutanoate + H2O</text>
        <dbReference type="Rhea" id="RHEA:24809"/>
        <dbReference type="ChEBI" id="CHEBI:11851"/>
        <dbReference type="ChEBI" id="CHEBI:15377"/>
        <dbReference type="ChEBI" id="CHEBI:49072"/>
        <dbReference type="EC" id="4.2.1.9"/>
    </reaction>
    <physiologicalReaction direction="left-to-right" evidence="1">
        <dbReference type="Rhea" id="RHEA:24810"/>
    </physiologicalReaction>
</comment>
<comment type="catalytic activity">
    <reaction evidence="1">
        <text>(2R,3R)-2,3-dihydroxy-3-methylpentanoate = (S)-3-methyl-2-oxopentanoate + H2O</text>
        <dbReference type="Rhea" id="RHEA:27694"/>
        <dbReference type="ChEBI" id="CHEBI:15377"/>
        <dbReference type="ChEBI" id="CHEBI:35146"/>
        <dbReference type="ChEBI" id="CHEBI:49258"/>
        <dbReference type="EC" id="4.2.1.9"/>
    </reaction>
    <physiologicalReaction direction="left-to-right" evidence="1">
        <dbReference type="Rhea" id="RHEA:27695"/>
    </physiologicalReaction>
</comment>
<comment type="cofactor">
    <cofactor evidence="1">
        <name>[2Fe-2S] cluster</name>
        <dbReference type="ChEBI" id="CHEBI:190135"/>
    </cofactor>
    <text evidence="1">Binds 1 [2Fe-2S] cluster per subunit. This cluster acts as a Lewis acid cofactor.</text>
</comment>
<comment type="cofactor">
    <cofactor evidence="1">
        <name>Mg(2+)</name>
        <dbReference type="ChEBI" id="CHEBI:18420"/>
    </cofactor>
</comment>
<comment type="pathway">
    <text evidence="1">Amino-acid biosynthesis; L-isoleucine biosynthesis; L-isoleucine from 2-oxobutanoate: step 3/4.</text>
</comment>
<comment type="pathway">
    <text evidence="1">Amino-acid biosynthesis; L-valine biosynthesis; L-valine from pyruvate: step 3/4.</text>
</comment>
<comment type="subunit">
    <text evidence="1">Homodimer.</text>
</comment>
<comment type="similarity">
    <text evidence="1">Belongs to the IlvD/Edd family.</text>
</comment>
<name>ILVD_HAEIE</name>
<reference key="1">
    <citation type="journal article" date="2007" name="Genome Biol.">
        <title>Characterization and modeling of the Haemophilus influenzae core and supragenomes based on the complete genomic sequences of Rd and 12 clinical nontypeable strains.</title>
        <authorList>
            <person name="Hogg J.S."/>
            <person name="Hu F.Z."/>
            <person name="Janto B."/>
            <person name="Boissy R."/>
            <person name="Hayes J."/>
            <person name="Keefe R."/>
            <person name="Post J.C."/>
            <person name="Ehrlich G.D."/>
        </authorList>
    </citation>
    <scope>NUCLEOTIDE SEQUENCE [LARGE SCALE GENOMIC DNA]</scope>
    <source>
        <strain>PittEE</strain>
    </source>
</reference>
<organism>
    <name type="scientific">Haemophilus influenzae (strain PittEE)</name>
    <dbReference type="NCBI Taxonomy" id="374930"/>
    <lineage>
        <taxon>Bacteria</taxon>
        <taxon>Pseudomonadati</taxon>
        <taxon>Pseudomonadota</taxon>
        <taxon>Gammaproteobacteria</taxon>
        <taxon>Pasteurellales</taxon>
        <taxon>Pasteurellaceae</taxon>
        <taxon>Haemophilus</taxon>
    </lineage>
</organism>
<sequence>MPKLRSATSTQGRNMAGARALWRATGMKENDFGKPIIAVVNSFTQFVPGHVHLKDMGQLVAAEIEKAGGVAKEFNTIAVDDGIAMGHGGMLYSLPSRDLIADSVEYMVNAHCADAMVCISNCDKITPGMLMAAMRLNIPTIFVSGGPMEAGKTKLSDQLIRLDLVDAMIEAADPNVSDERIDAIERSACPTCGSCSGMFTANSMNCLTEALGLSLPGNGSMLATHADRKELFLKAGRQIVELCKRYYEQDDVSVLPRSIGTFKAFENAMSLDIAMGGSSNTVLHLLAAAQEAGVDFKMEDIDRLSRKVPCLSKIAPNTNKYHMEDVHRAGGIMGLLGELDRAGLIHKNTHTVLGMSMGEQLDQYDIIRNQDEELHKFFRAGPAGIRTTQAFSQDCRWDSVDNDRVNGCIRNKENAISQEGGLAVLFGNLAEDGCIVKTAGVDESIWKFTGTAIVFESQEDAVAGILGGKVKEGHVVVIRYEGPKGGPGMQEMLYPTSYLKSMGLGKKCALLTDGRFSGGTSGLSIGHASPEAASGGAIGLVRDGDIINIDIPNRAINLEISNEELAARRSGQDQKGWQPAHREREVSFALKVFGHFATSADKGAVRDKTLLK</sequence>
<gene>
    <name evidence="1" type="primary">ilvD</name>
    <name type="ordered locus">CGSHiEE_08425</name>
</gene>
<feature type="chain" id="PRO_1000000987" description="Dihydroxy-acid dehydratase">
    <location>
        <begin position="1"/>
        <end position="612"/>
    </location>
</feature>
<feature type="active site" description="Proton acceptor" evidence="1">
    <location>
        <position position="517"/>
    </location>
</feature>
<feature type="binding site" evidence="1">
    <location>
        <position position="81"/>
    </location>
    <ligand>
        <name>Mg(2+)</name>
        <dbReference type="ChEBI" id="CHEBI:18420"/>
    </ligand>
</feature>
<feature type="binding site" evidence="1">
    <location>
        <position position="122"/>
    </location>
    <ligand>
        <name>[2Fe-2S] cluster</name>
        <dbReference type="ChEBI" id="CHEBI:190135"/>
    </ligand>
</feature>
<feature type="binding site" evidence="1">
    <location>
        <position position="123"/>
    </location>
    <ligand>
        <name>Mg(2+)</name>
        <dbReference type="ChEBI" id="CHEBI:18420"/>
    </ligand>
</feature>
<feature type="binding site" description="via carbamate group" evidence="1">
    <location>
        <position position="124"/>
    </location>
    <ligand>
        <name>Mg(2+)</name>
        <dbReference type="ChEBI" id="CHEBI:18420"/>
    </ligand>
</feature>
<feature type="binding site" evidence="1">
    <location>
        <position position="195"/>
    </location>
    <ligand>
        <name>[2Fe-2S] cluster</name>
        <dbReference type="ChEBI" id="CHEBI:190135"/>
    </ligand>
</feature>
<feature type="binding site" evidence="1">
    <location>
        <position position="491"/>
    </location>
    <ligand>
        <name>Mg(2+)</name>
        <dbReference type="ChEBI" id="CHEBI:18420"/>
    </ligand>
</feature>
<feature type="modified residue" description="N6-carboxylysine" evidence="1">
    <location>
        <position position="124"/>
    </location>
</feature>
<protein>
    <recommendedName>
        <fullName evidence="1">Dihydroxy-acid dehydratase</fullName>
        <shortName evidence="1">DAD</shortName>
        <ecNumber evidence="1">4.2.1.9</ecNumber>
    </recommendedName>
</protein>
<evidence type="ECO:0000255" key="1">
    <source>
        <dbReference type="HAMAP-Rule" id="MF_00012"/>
    </source>
</evidence>
<keyword id="KW-0001">2Fe-2S</keyword>
<keyword id="KW-0028">Amino-acid biosynthesis</keyword>
<keyword id="KW-0100">Branched-chain amino acid biosynthesis</keyword>
<keyword id="KW-0408">Iron</keyword>
<keyword id="KW-0411">Iron-sulfur</keyword>
<keyword id="KW-0456">Lyase</keyword>
<keyword id="KW-0460">Magnesium</keyword>
<keyword id="KW-0479">Metal-binding</keyword>